<gene>
    <name evidence="1" type="primary">lpxB</name>
    <name type="ordered locus">Nwi_1846</name>
</gene>
<feature type="chain" id="PRO_0000255202" description="Lipid-A-disaccharide synthase">
    <location>
        <begin position="1"/>
        <end position="396"/>
    </location>
</feature>
<sequence>MPDEASANPSRKIFLIATEESGDRLGSSLMKALRRRLGCSVRFEGVGGQTMAREGLVSLFPIEELSIMGFTAVVKQLPMIVRRIRGTADAVIAAAPDVLVIIDSPDFTHRVARRVRARCRGLPIVDYVSPSVWAWRSGRARAMRSYVDHVLALLPFEPEAYRRLGGPPCTYVGHPLLEQIGVLRPDAQERQRRDADPPTLLVLPGSRRSEIRHHLSVFGETIGMLQQSIPEIEVVLPTTPHLVDEITPAVATWPRRPRVVIGEDDKRAAFRVARAALAKSGTVTLELALAGVPMVAAYKAGSVEAWIARRVIRVSSVILANLVIRENVIPEFLQEDCVPGKLAPALQEILTDSPMRRRQLKAFDGLNTIMATGQRSPSELAADIVIEAMRESRARM</sequence>
<proteinExistence type="inferred from homology"/>
<organism>
    <name type="scientific">Nitrobacter winogradskyi (strain ATCC 25391 / DSM 10237 / CIP 104748 / NCIMB 11846 / Nb-255)</name>
    <dbReference type="NCBI Taxonomy" id="323098"/>
    <lineage>
        <taxon>Bacteria</taxon>
        <taxon>Pseudomonadati</taxon>
        <taxon>Pseudomonadota</taxon>
        <taxon>Alphaproteobacteria</taxon>
        <taxon>Hyphomicrobiales</taxon>
        <taxon>Nitrobacteraceae</taxon>
        <taxon>Nitrobacter</taxon>
    </lineage>
</organism>
<keyword id="KW-0328">Glycosyltransferase</keyword>
<keyword id="KW-0441">Lipid A biosynthesis</keyword>
<keyword id="KW-0444">Lipid biosynthesis</keyword>
<keyword id="KW-0443">Lipid metabolism</keyword>
<keyword id="KW-1185">Reference proteome</keyword>
<keyword id="KW-0808">Transferase</keyword>
<name>LPXB_NITWN</name>
<evidence type="ECO:0000255" key="1">
    <source>
        <dbReference type="HAMAP-Rule" id="MF_00392"/>
    </source>
</evidence>
<accession>Q3SRI5</accession>
<comment type="function">
    <text evidence="1">Condensation of UDP-2,3-diacylglucosamine and 2,3-diacylglucosamine-1-phosphate to form lipid A disaccharide, a precursor of lipid A, a phosphorylated glycolipid that anchors the lipopolysaccharide to the outer membrane of the cell.</text>
</comment>
<comment type="catalytic activity">
    <reaction evidence="1">
        <text>a lipid X + a UDP-2-N,3-O-bis[(3R)-3-hydroxyacyl]-alpha-D-glucosamine = a lipid A disaccharide + UDP + H(+)</text>
        <dbReference type="Rhea" id="RHEA:67828"/>
        <dbReference type="ChEBI" id="CHEBI:15378"/>
        <dbReference type="ChEBI" id="CHEBI:58223"/>
        <dbReference type="ChEBI" id="CHEBI:137748"/>
        <dbReference type="ChEBI" id="CHEBI:176338"/>
        <dbReference type="ChEBI" id="CHEBI:176343"/>
        <dbReference type="EC" id="2.4.1.182"/>
    </reaction>
</comment>
<comment type="pathway">
    <text evidence="1">Bacterial outer membrane biogenesis; LPS lipid A biosynthesis.</text>
</comment>
<comment type="similarity">
    <text evidence="1">Belongs to the LpxB family.</text>
</comment>
<protein>
    <recommendedName>
        <fullName evidence="1">Lipid-A-disaccharide synthase</fullName>
        <ecNumber evidence="1">2.4.1.182</ecNumber>
    </recommendedName>
</protein>
<reference key="1">
    <citation type="journal article" date="2006" name="Appl. Environ. Microbiol.">
        <title>Genome sequence of the chemolithoautotrophic nitrite-oxidizing bacterium Nitrobacter winogradskyi Nb-255.</title>
        <authorList>
            <person name="Starkenburg S.R."/>
            <person name="Chain P.S.G."/>
            <person name="Sayavedra-Soto L.A."/>
            <person name="Hauser L."/>
            <person name="Land M.L."/>
            <person name="Larimer F.W."/>
            <person name="Malfatti S.A."/>
            <person name="Klotz M.G."/>
            <person name="Bottomley P.J."/>
            <person name="Arp D.J."/>
            <person name="Hickey W.J."/>
        </authorList>
    </citation>
    <scope>NUCLEOTIDE SEQUENCE [LARGE SCALE GENOMIC DNA]</scope>
    <source>
        <strain>ATCC 25391 / DSM 10237 / CIP 104748 / NCIMB 11846 / Nb-255</strain>
    </source>
</reference>
<dbReference type="EC" id="2.4.1.182" evidence="1"/>
<dbReference type="EMBL" id="CP000115">
    <property type="protein sequence ID" value="ABA05106.1"/>
    <property type="molecule type" value="Genomic_DNA"/>
</dbReference>
<dbReference type="RefSeq" id="WP_011315102.1">
    <property type="nucleotide sequence ID" value="NC_007406.1"/>
</dbReference>
<dbReference type="SMR" id="Q3SRI5"/>
<dbReference type="STRING" id="323098.Nwi_1846"/>
<dbReference type="CAZy" id="GT19">
    <property type="family name" value="Glycosyltransferase Family 19"/>
</dbReference>
<dbReference type="KEGG" id="nwi:Nwi_1846"/>
<dbReference type="eggNOG" id="COG0763">
    <property type="taxonomic scope" value="Bacteria"/>
</dbReference>
<dbReference type="HOGENOM" id="CLU_036577_3_0_5"/>
<dbReference type="OrthoDB" id="9801642at2"/>
<dbReference type="UniPathway" id="UPA00973"/>
<dbReference type="Proteomes" id="UP000002531">
    <property type="component" value="Chromosome"/>
</dbReference>
<dbReference type="GO" id="GO:0016020">
    <property type="term" value="C:membrane"/>
    <property type="evidence" value="ECO:0007669"/>
    <property type="project" value="GOC"/>
</dbReference>
<dbReference type="GO" id="GO:0008915">
    <property type="term" value="F:lipid-A-disaccharide synthase activity"/>
    <property type="evidence" value="ECO:0007669"/>
    <property type="project" value="UniProtKB-UniRule"/>
</dbReference>
<dbReference type="GO" id="GO:0005543">
    <property type="term" value="F:phospholipid binding"/>
    <property type="evidence" value="ECO:0007669"/>
    <property type="project" value="TreeGrafter"/>
</dbReference>
<dbReference type="GO" id="GO:0009245">
    <property type="term" value="P:lipid A biosynthetic process"/>
    <property type="evidence" value="ECO:0007669"/>
    <property type="project" value="UniProtKB-UniRule"/>
</dbReference>
<dbReference type="HAMAP" id="MF_00392">
    <property type="entry name" value="LpxB"/>
    <property type="match status" value="1"/>
</dbReference>
<dbReference type="InterPro" id="IPR003835">
    <property type="entry name" value="Glyco_trans_19"/>
</dbReference>
<dbReference type="NCBIfam" id="TIGR00215">
    <property type="entry name" value="lpxB"/>
    <property type="match status" value="1"/>
</dbReference>
<dbReference type="PANTHER" id="PTHR30372">
    <property type="entry name" value="LIPID-A-DISACCHARIDE SYNTHASE"/>
    <property type="match status" value="1"/>
</dbReference>
<dbReference type="PANTHER" id="PTHR30372:SF4">
    <property type="entry name" value="LIPID-A-DISACCHARIDE SYNTHASE, MITOCHONDRIAL-RELATED"/>
    <property type="match status" value="1"/>
</dbReference>
<dbReference type="Pfam" id="PF02684">
    <property type="entry name" value="LpxB"/>
    <property type="match status" value="1"/>
</dbReference>
<dbReference type="SUPFAM" id="SSF53756">
    <property type="entry name" value="UDP-Glycosyltransferase/glycogen phosphorylase"/>
    <property type="match status" value="1"/>
</dbReference>